<gene>
    <name evidence="3" type="primary">zmaJ</name>
</gene>
<protein>
    <recommendedName>
        <fullName evidence="4">Zwittermicin A synthase ZmaJ</fullName>
        <ecNumber evidence="2">6.2.1.72</ecNumber>
    </recommendedName>
    <alternativeName>
        <fullName evidence="4">L-serine--[L-seryl-carrier protein] ligase</fullName>
    </alternativeName>
</protein>
<sequence length="525" mass="58770">MSTCIQKLFEEQVVRTPDEVAVIFKKETLTYKELNEKSNQLARLLREGGVGPDTVVGIMVERSIEMVVGIFGILKAGGAYLPLSPNHPSSRLQFIIEDSGAKLILTQKQILHRFQDSLKADMLALDSISYEGKGENLECINKPSDLVYVIYTSGSTGKPKGVMIEHSALINRIEWMQEAYPISSKDTILQKTPYTFDVSVWEMFWWAIVGAKVCILAPGMEKFPQAIIETTESNDVTIMHFVPSMLSAFLHYLDVTGETNRIKSLKQVFVSGEALLSQHINRFNKLLNFSNGTLLTNLYGPTEATIDVTAYDCPTHEITEGSVPIGRPIKNIEMFVVDKYGNKLPEGHIGELCISGIGLARGYVNRPQLTAEKFVQYSLDTRIYKTGDLALIRSDGNIEFHGRIDFQVKVNGLRIELGEIESCLMSCEGVLQCAVIVRQESEMVVKLIAFYESENDIELERLKKYLRLFLPDYMIPNSFVRVNEMPLTDSGKIDRKVLALLGSDKYSHHTTLVGGSVNEESSKDS</sequence>
<organism>
    <name type="scientific">Bacillus cereus</name>
    <dbReference type="NCBI Taxonomy" id="1396"/>
    <lineage>
        <taxon>Bacteria</taxon>
        <taxon>Bacillati</taxon>
        <taxon>Bacillota</taxon>
        <taxon>Bacilli</taxon>
        <taxon>Bacillales</taxon>
        <taxon>Bacillaceae</taxon>
        <taxon>Bacillus</taxon>
        <taxon>Bacillus cereus group</taxon>
    </lineage>
</organism>
<reference key="1">
    <citation type="journal article" date="2009" name="Appl. Environ. Microbiol.">
        <title>Characterization of the complete zwittermicin A biosynthesis gene cluster from Bacillus cereus.</title>
        <authorList>
            <person name="Kevany B.M."/>
            <person name="Rasko D.A."/>
            <person name="Thomas M.G."/>
        </authorList>
    </citation>
    <scope>NUCLEOTIDE SEQUENCE [GENOMIC DNA]</scope>
    <source>
        <strain>UW85</strain>
    </source>
</reference>
<reference key="2">
    <citation type="journal article" date="2004" name="Appl. Environ. Microbiol.">
        <title>Genetics of zwittermicin a production by Bacillus cereus.</title>
        <authorList>
            <person name="Emmert E.A."/>
            <person name="Klimowicz A.K."/>
            <person name="Thomas M.G."/>
            <person name="Handelsman J."/>
        </authorList>
    </citation>
    <scope>FUNCTION</scope>
    <scope>PATHWAY</scope>
    <scope>DISRUPTION PHENOTYPE</scope>
    <source>
        <strain>UW85</strain>
    </source>
</reference>
<reference key="3">
    <citation type="journal article" date="2006" name="Proc. Natl. Acad. Sci. U.S.A.">
        <title>Hydroxymalonyl-acyl carrier protein (ACP) and aminomalonyl-ACP are two additional type I polyketide synthase extender units.</title>
        <authorList>
            <person name="Chan Y.A."/>
            <person name="Boyne M.T. II"/>
            <person name="Podevels A.M."/>
            <person name="Klimowicz A.K."/>
            <person name="Handelsman J."/>
            <person name="Kelleher N.L."/>
            <person name="Thomas M.G."/>
        </authorList>
    </citation>
    <scope>FUNCTION</scope>
    <scope>CATALYTIC ACTIVITY</scope>
    <scope>BIOPHYSICOCHEMICAL PROPERTIES</scope>
    <source>
        <strain>UW85</strain>
    </source>
</reference>
<dbReference type="EC" id="6.2.1.72" evidence="2"/>
<dbReference type="EMBL" id="FJ430564">
    <property type="protein sequence ID" value="AAR87759.1"/>
    <property type="molecule type" value="Genomic_DNA"/>
</dbReference>
<dbReference type="RefSeq" id="WP_065229817.1">
    <property type="nucleotide sequence ID" value="NZ_JALJWA010000002.1"/>
</dbReference>
<dbReference type="SMR" id="Q7BQ71"/>
<dbReference type="BioCyc" id="MetaCyc:MONOMER-19434"/>
<dbReference type="BRENDA" id="6.2.1.72">
    <property type="organism ID" value="648"/>
</dbReference>
<dbReference type="GO" id="GO:0005829">
    <property type="term" value="C:cytosol"/>
    <property type="evidence" value="ECO:0007669"/>
    <property type="project" value="TreeGrafter"/>
</dbReference>
<dbReference type="GO" id="GO:0005524">
    <property type="term" value="F:ATP binding"/>
    <property type="evidence" value="ECO:0007669"/>
    <property type="project" value="UniProtKB-KW"/>
</dbReference>
<dbReference type="GO" id="GO:0016874">
    <property type="term" value="F:ligase activity"/>
    <property type="evidence" value="ECO:0007669"/>
    <property type="project" value="UniProtKB-KW"/>
</dbReference>
<dbReference type="GO" id="GO:0031177">
    <property type="term" value="F:phosphopantetheine binding"/>
    <property type="evidence" value="ECO:0007669"/>
    <property type="project" value="TreeGrafter"/>
</dbReference>
<dbReference type="GO" id="GO:0043041">
    <property type="term" value="P:amino acid activation for nonribosomal peptide biosynthetic process"/>
    <property type="evidence" value="ECO:0007669"/>
    <property type="project" value="TreeGrafter"/>
</dbReference>
<dbReference type="GO" id="GO:0017000">
    <property type="term" value="P:antibiotic biosynthetic process"/>
    <property type="evidence" value="ECO:0007669"/>
    <property type="project" value="UniProtKB-KW"/>
</dbReference>
<dbReference type="GO" id="GO:0044550">
    <property type="term" value="P:secondary metabolite biosynthetic process"/>
    <property type="evidence" value="ECO:0007669"/>
    <property type="project" value="TreeGrafter"/>
</dbReference>
<dbReference type="CDD" id="cd05930">
    <property type="entry name" value="A_NRPS"/>
    <property type="match status" value="1"/>
</dbReference>
<dbReference type="FunFam" id="3.40.50.980:FF:000002">
    <property type="entry name" value="Enterobactin synthetase component F"/>
    <property type="match status" value="1"/>
</dbReference>
<dbReference type="FunFam" id="3.40.50.12780:FF:000012">
    <property type="entry name" value="Non-ribosomal peptide synthetase"/>
    <property type="match status" value="1"/>
</dbReference>
<dbReference type="FunFam" id="3.40.50.980:FF:000001">
    <property type="entry name" value="Non-ribosomal peptide synthetase"/>
    <property type="match status" value="1"/>
</dbReference>
<dbReference type="Gene3D" id="3.30.300.30">
    <property type="match status" value="1"/>
</dbReference>
<dbReference type="Gene3D" id="3.40.50.980">
    <property type="match status" value="2"/>
</dbReference>
<dbReference type="Gene3D" id="2.30.38.10">
    <property type="entry name" value="Luciferase, Domain 3"/>
    <property type="match status" value="1"/>
</dbReference>
<dbReference type="InterPro" id="IPR010071">
    <property type="entry name" value="AA_adenyl_dom"/>
</dbReference>
<dbReference type="InterPro" id="IPR025110">
    <property type="entry name" value="AMP-bd_C"/>
</dbReference>
<dbReference type="InterPro" id="IPR045851">
    <property type="entry name" value="AMP-bd_C_sf"/>
</dbReference>
<dbReference type="InterPro" id="IPR020459">
    <property type="entry name" value="AMP-binding"/>
</dbReference>
<dbReference type="InterPro" id="IPR020845">
    <property type="entry name" value="AMP-binding_CS"/>
</dbReference>
<dbReference type="InterPro" id="IPR000873">
    <property type="entry name" value="AMP-dep_synth/lig_dom"/>
</dbReference>
<dbReference type="NCBIfam" id="TIGR01733">
    <property type="entry name" value="AA-adenyl-dom"/>
    <property type="match status" value="1"/>
</dbReference>
<dbReference type="PANTHER" id="PTHR45527">
    <property type="entry name" value="NONRIBOSOMAL PEPTIDE SYNTHETASE"/>
    <property type="match status" value="1"/>
</dbReference>
<dbReference type="PANTHER" id="PTHR45527:SF14">
    <property type="entry name" value="PLIPASTATIN SYNTHASE SUBUNIT B"/>
    <property type="match status" value="1"/>
</dbReference>
<dbReference type="Pfam" id="PF00501">
    <property type="entry name" value="AMP-binding"/>
    <property type="match status" value="1"/>
</dbReference>
<dbReference type="Pfam" id="PF13193">
    <property type="entry name" value="AMP-binding_C"/>
    <property type="match status" value="1"/>
</dbReference>
<dbReference type="PRINTS" id="PR00154">
    <property type="entry name" value="AMPBINDING"/>
</dbReference>
<dbReference type="SUPFAM" id="SSF56801">
    <property type="entry name" value="Acetyl-CoA synthetase-like"/>
    <property type="match status" value="1"/>
</dbReference>
<dbReference type="PROSITE" id="PS00455">
    <property type="entry name" value="AMP_BINDING"/>
    <property type="match status" value="1"/>
</dbReference>
<accession>Q7BQ71</accession>
<comment type="function">
    <text evidence="1 2">Involved in the biosynthesis of the linear aminopolyol antibiotic zwittermicin A (ZmA) (PubMed:14711631). Specifically adenylates L-serine and loads it onto the holo form of ZmaH via a thioester linkage to the phosphopanthetheine moiety (PubMed:16983083).</text>
</comment>
<comment type="catalytic activity">
    <reaction evidence="2">
        <text>holo-[peptidyl-carrier protein] + L-serine + ATP = L-seryl-[peptidyl-carrier protein] + AMP + diphosphate</text>
        <dbReference type="Rhea" id="RHEA:61704"/>
        <dbReference type="Rhea" id="RHEA-COMP:11480"/>
        <dbReference type="Rhea" id="RHEA-COMP:15913"/>
        <dbReference type="ChEBI" id="CHEBI:30616"/>
        <dbReference type="ChEBI" id="CHEBI:33019"/>
        <dbReference type="ChEBI" id="CHEBI:33384"/>
        <dbReference type="ChEBI" id="CHEBI:64479"/>
        <dbReference type="ChEBI" id="CHEBI:144955"/>
        <dbReference type="ChEBI" id="CHEBI:456215"/>
        <dbReference type="EC" id="6.2.1.72"/>
    </reaction>
    <physiologicalReaction direction="left-to-right" evidence="2">
        <dbReference type="Rhea" id="RHEA:61705"/>
    </physiologicalReaction>
</comment>
<comment type="biophysicochemical properties">
    <kinetics>
        <KM evidence="2">1.8 mM for L-serine</KM>
        <text evidence="2">kcat is 42 min(-1).</text>
    </kinetics>
</comment>
<comment type="pathway">
    <text evidence="1">Antibiotic biosynthesis.</text>
</comment>
<comment type="disruption phenotype">
    <text evidence="1">Disruption of the gene abolishes ZmA production.</text>
</comment>
<comment type="similarity">
    <text evidence="4">Belongs to the ATP-dependent AMP-binding enzyme family.</text>
</comment>
<name>ZMAJ_BACCE</name>
<proteinExistence type="evidence at protein level"/>
<evidence type="ECO:0000269" key="1">
    <source>
    </source>
</evidence>
<evidence type="ECO:0000269" key="2">
    <source>
    </source>
</evidence>
<evidence type="ECO:0000303" key="3">
    <source>
    </source>
</evidence>
<evidence type="ECO:0000305" key="4"/>
<feature type="chain" id="PRO_0000454893" description="Zwittermicin A synthase ZmaJ">
    <location>
        <begin position="1"/>
        <end position="525"/>
    </location>
</feature>
<keyword id="KW-0045">Antibiotic biosynthesis</keyword>
<keyword id="KW-0067">ATP-binding</keyword>
<keyword id="KW-0436">Ligase</keyword>
<keyword id="KW-0547">Nucleotide-binding</keyword>